<organism>
    <name type="scientific">Takifugu rubripes</name>
    <name type="common">Japanese pufferfish</name>
    <name type="synonym">Fugu rubripes</name>
    <dbReference type="NCBI Taxonomy" id="31033"/>
    <lineage>
        <taxon>Eukaryota</taxon>
        <taxon>Metazoa</taxon>
        <taxon>Chordata</taxon>
        <taxon>Craniata</taxon>
        <taxon>Vertebrata</taxon>
        <taxon>Euteleostomi</taxon>
        <taxon>Actinopterygii</taxon>
        <taxon>Neopterygii</taxon>
        <taxon>Teleostei</taxon>
        <taxon>Neoteleostei</taxon>
        <taxon>Acanthomorphata</taxon>
        <taxon>Eupercaria</taxon>
        <taxon>Tetraodontiformes</taxon>
        <taxon>Tetradontoidea</taxon>
        <taxon>Tetraodontidae</taxon>
        <taxon>Takifugu</taxon>
    </lineage>
</organism>
<accession>O42385</accession>
<reference key="1">
    <citation type="journal article" date="1997" name="Gene">
        <title>Molecular cloning of 5-hydroxytryptamine (5-HT) type 1 receptor genes from the Japanese puffer fish, Fugu rubripes.</title>
        <authorList>
            <person name="Yamaguchi F."/>
            <person name="Brenner S."/>
        </authorList>
    </citation>
    <scope>NUCLEOTIDE SEQUENCE [GENOMIC DNA]</scope>
    <source>
        <tissue>Testis</tissue>
    </source>
</reference>
<evidence type="ECO:0000250" key="1">
    <source>
        <dbReference type="UniProtKB" id="P08908"/>
    </source>
</evidence>
<evidence type="ECO:0000250" key="2">
    <source>
        <dbReference type="UniProtKB" id="P41595"/>
    </source>
</evidence>
<evidence type="ECO:0000255" key="3"/>
<evidence type="ECO:0000255" key="4">
    <source>
        <dbReference type="PROSITE-ProRule" id="PRU00521"/>
    </source>
</evidence>
<evidence type="ECO:0000256" key="5">
    <source>
        <dbReference type="SAM" id="MobiDB-lite"/>
    </source>
</evidence>
<protein>
    <recommendedName>
        <fullName>5-hydroxytryptamine receptor 1A-alpha</fullName>
        <shortName>5-HT-1A-alpha</shortName>
        <shortName>5-HT1A-alpha</shortName>
    </recommendedName>
    <alternativeName>
        <fullName>F1A</fullName>
    </alternativeName>
    <alternativeName>
        <fullName>Serotonin receptor 1A-alpha</fullName>
    </alternativeName>
</protein>
<comment type="function">
    <text evidence="1">G-protein coupled receptor for 5-hydroxytryptamine (serotonin). Also functions as a receptor for various drugs and psychoactive substances. Ligand binding causes a conformation change that triggers signaling via guanine nucleotide-binding proteins (G proteins) and modulates the activity of downstream effectors, such as adenylate cyclase. HTR1A is coupled to G(i)/G(o) G alpha proteins and mediates inhibitory neurotransmission: signaling inhibits adenylate cyclase activity and activates a phosphatidylinositol-calcium second messenger system that regulates the release of Ca(2+) ions from intracellular stores. Beta-arrestin family members regulate signaling by mediating both receptor desensitization and resensitization processes.</text>
</comment>
<comment type="activity regulation">
    <text evidence="1">G-protein coupled receptor activity is regulated by lipids: phosphatidylinositol 4-phosphate increases HTR1A-mediated activity.</text>
</comment>
<comment type="subcellular location">
    <subcellularLocation>
        <location evidence="1">Cell membrane</location>
        <topology evidence="1">Multi-pass membrane protein</topology>
    </subcellularLocation>
</comment>
<comment type="similarity">
    <text evidence="4">Belongs to the G-protein coupled receptor 1 family. 5-hydroxytryptamine receptor subfamily.</text>
</comment>
<proteinExistence type="inferred from homology"/>
<feature type="chain" id="PRO_0000068909" description="5-hydroxytryptamine receptor 1A-alpha">
    <location>
        <begin position="1"/>
        <end position="423"/>
    </location>
</feature>
<feature type="topological domain" description="Extracellular" evidence="1">
    <location>
        <begin position="1"/>
        <end position="47"/>
    </location>
</feature>
<feature type="transmembrane region" description="Helical; Name=1" evidence="1">
    <location>
        <begin position="48"/>
        <end position="68"/>
    </location>
</feature>
<feature type="topological domain" description="Cytoplasmic" evidence="1">
    <location>
        <begin position="69"/>
        <end position="82"/>
    </location>
</feature>
<feature type="transmembrane region" description="Helical; Name=2" evidence="1">
    <location>
        <begin position="83"/>
        <end position="107"/>
    </location>
</feature>
<feature type="topological domain" description="Extracellular" evidence="1">
    <location>
        <begin position="108"/>
        <end position="116"/>
    </location>
</feature>
<feature type="transmembrane region" description="Helical; Name=3" evidence="1">
    <location>
        <begin position="117"/>
        <end position="141"/>
    </location>
</feature>
<feature type="topological domain" description="Cytoplasmic" evidence="1">
    <location>
        <begin position="142"/>
        <end position="161"/>
    </location>
</feature>
<feature type="transmembrane region" description="Helical; Name=4" evidence="1">
    <location>
        <begin position="162"/>
        <end position="183"/>
    </location>
</feature>
<feature type="topological domain" description="Extracellular" evidence="1">
    <location>
        <begin position="184"/>
        <end position="202"/>
    </location>
</feature>
<feature type="transmembrane region" description="Helical; Name=5" evidence="1">
    <location>
        <begin position="203"/>
        <end position="225"/>
    </location>
</feature>
<feature type="topological domain" description="Cytoplasmic" evidence="1">
    <location>
        <begin position="226"/>
        <end position="347"/>
    </location>
</feature>
<feature type="transmembrane region" description="Helical; Name=6" evidence="1">
    <location>
        <begin position="348"/>
        <end position="371"/>
    </location>
</feature>
<feature type="topological domain" description="Extracellular" evidence="1">
    <location>
        <begin position="372"/>
        <end position="379"/>
    </location>
</feature>
<feature type="transmembrane region" description="Helical; Name=7" evidence="1">
    <location>
        <begin position="380"/>
        <end position="404"/>
    </location>
</feature>
<feature type="topological domain" description="Cytoplasmic" evidence="1">
    <location>
        <begin position="405"/>
        <end position="423"/>
    </location>
</feature>
<feature type="region of interest" description="Disordered" evidence="5">
    <location>
        <begin position="311"/>
        <end position="332"/>
    </location>
</feature>
<feature type="short sequence motif" description="DRY motif; important for ligand-induced conformation changes" evidence="2">
    <location>
        <begin position="142"/>
        <end position="144"/>
    </location>
</feature>
<feature type="short sequence motif" description="NPxxY motif; important for ligand-induced conformation changes and signaling" evidence="2">
    <location>
        <begin position="397"/>
        <end position="401"/>
    </location>
</feature>
<feature type="compositionally biased region" description="Polar residues" evidence="5">
    <location>
        <begin position="316"/>
        <end position="329"/>
    </location>
</feature>
<feature type="binding site" evidence="1">
    <location>
        <position position="125"/>
    </location>
    <ligand>
        <name>serotonin</name>
        <dbReference type="ChEBI" id="CHEBI:350546"/>
    </ligand>
</feature>
<feature type="binding site" evidence="1">
    <location>
        <position position="129"/>
    </location>
    <ligand>
        <name>serotonin</name>
        <dbReference type="ChEBI" id="CHEBI:350546"/>
    </ligand>
</feature>
<feature type="binding site" evidence="1">
    <location>
        <position position="320"/>
    </location>
    <ligand>
        <name>1D-myo-inositol 4-phosphate</name>
        <dbReference type="ChEBI" id="CHEBI:58469"/>
    </ligand>
</feature>
<feature type="binding site" evidence="1">
    <location>
        <position position="346"/>
    </location>
    <ligand>
        <name>1D-myo-inositol 4-phosphate</name>
        <dbReference type="ChEBI" id="CHEBI:58469"/>
    </ligand>
</feature>
<feature type="binding site" evidence="1">
    <location>
        <position position="347"/>
    </location>
    <ligand>
        <name>1D-myo-inositol 4-phosphate</name>
        <dbReference type="ChEBI" id="CHEBI:58469"/>
    </ligand>
</feature>
<feature type="binding site" evidence="1">
    <location>
        <position position="353"/>
    </location>
    <ligand>
        <name>1D-myo-inositol 4-phosphate</name>
        <dbReference type="ChEBI" id="CHEBI:58469"/>
    </ligand>
</feature>
<feature type="binding site" evidence="1">
    <location>
        <position position="404"/>
    </location>
    <ligand>
        <name>1D-myo-inositol 4-phosphate</name>
        <dbReference type="ChEBI" id="CHEBI:58469"/>
    </ligand>
</feature>
<feature type="binding site" evidence="1">
    <location>
        <position position="405"/>
    </location>
    <ligand>
        <name>1D-myo-inositol 4-phosphate</name>
        <dbReference type="ChEBI" id="CHEBI:58469"/>
    </ligand>
</feature>
<feature type="binding site" evidence="1">
    <location>
        <position position="406"/>
    </location>
    <ligand>
        <name>1D-myo-inositol 4-phosphate</name>
        <dbReference type="ChEBI" id="CHEBI:58469"/>
    </ligand>
</feature>
<feature type="glycosylation site" description="N-linked (GlcNAc...) asparagine" evidence="3">
    <location>
        <position position="9"/>
    </location>
</feature>
<feature type="glycosylation site" description="N-linked (GlcNAc...) asparagine" evidence="3">
    <location>
        <position position="12"/>
    </location>
</feature>
<feature type="glycosylation site" description="N-linked (GlcNAc...) asparagine" evidence="3">
    <location>
        <position position="30"/>
    </location>
</feature>
<feature type="disulfide bond" evidence="4">
    <location>
        <begin position="118"/>
        <end position="196"/>
    </location>
</feature>
<dbReference type="EMBL" id="X95936">
    <property type="protein sequence ID" value="CAA65175.1"/>
    <property type="molecule type" value="Genomic_DNA"/>
</dbReference>
<dbReference type="SMR" id="O42385"/>
<dbReference type="FunCoup" id="O42385">
    <property type="interactions" value="987"/>
</dbReference>
<dbReference type="STRING" id="31033.ENSTRUP00000057435"/>
<dbReference type="GlyCosmos" id="O42385">
    <property type="glycosylation" value="3 sites, No reported glycans"/>
</dbReference>
<dbReference type="Ensembl" id="ENSTRUT00000006732.3">
    <property type="protein sequence ID" value="ENSTRUP00000057435.2"/>
    <property type="gene ID" value="ENSTRUG00000002876.3"/>
</dbReference>
<dbReference type="GeneTree" id="ENSGT00940000154484"/>
<dbReference type="InParanoid" id="O42385"/>
<dbReference type="OMA" id="VQHCNSS"/>
<dbReference type="Proteomes" id="UP000005226">
    <property type="component" value="Chromosome 21"/>
</dbReference>
<dbReference type="GO" id="GO:0005886">
    <property type="term" value="C:plasma membrane"/>
    <property type="evidence" value="ECO:0000250"/>
    <property type="project" value="UniProtKB"/>
</dbReference>
<dbReference type="GO" id="GO:0004993">
    <property type="term" value="F:G protein-coupled serotonin receptor activity"/>
    <property type="evidence" value="ECO:0000250"/>
    <property type="project" value="UniProtKB"/>
</dbReference>
<dbReference type="GO" id="GO:0071880">
    <property type="term" value="P:adenylate cyclase-activating adrenergic receptor signaling pathway"/>
    <property type="evidence" value="ECO:0007669"/>
    <property type="project" value="TreeGrafter"/>
</dbReference>
<dbReference type="GO" id="GO:0007198">
    <property type="term" value="P:adenylate cyclase-inhibiting serotonin receptor signaling pathway"/>
    <property type="evidence" value="ECO:0000250"/>
    <property type="project" value="UniProtKB"/>
</dbReference>
<dbReference type="GO" id="GO:0043410">
    <property type="term" value="P:positive regulation of MAPK cascade"/>
    <property type="evidence" value="ECO:0007669"/>
    <property type="project" value="TreeGrafter"/>
</dbReference>
<dbReference type="GO" id="GO:0050795">
    <property type="term" value="P:regulation of behavior"/>
    <property type="evidence" value="ECO:0007669"/>
    <property type="project" value="InterPro"/>
</dbReference>
<dbReference type="GO" id="GO:0046883">
    <property type="term" value="P:regulation of hormone secretion"/>
    <property type="evidence" value="ECO:0007669"/>
    <property type="project" value="InterPro"/>
</dbReference>
<dbReference type="GO" id="GO:0019229">
    <property type="term" value="P:regulation of vasoconstriction"/>
    <property type="evidence" value="ECO:0007669"/>
    <property type="project" value="InterPro"/>
</dbReference>
<dbReference type="GO" id="GO:0007210">
    <property type="term" value="P:serotonin receptor signaling pathway"/>
    <property type="evidence" value="ECO:0000250"/>
    <property type="project" value="UniProtKB"/>
</dbReference>
<dbReference type="CDD" id="cd15330">
    <property type="entry name" value="7tmA_5-HT1A_vertebrates"/>
    <property type="match status" value="1"/>
</dbReference>
<dbReference type="Gene3D" id="1.20.1070.10">
    <property type="entry name" value="Rhodopsin 7-helix transmembrane proteins"/>
    <property type="match status" value="1"/>
</dbReference>
<dbReference type="InterPro" id="IPR000610">
    <property type="entry name" value="5HT1A_rcpt"/>
</dbReference>
<dbReference type="InterPro" id="IPR002231">
    <property type="entry name" value="5HT_rcpt"/>
</dbReference>
<dbReference type="InterPro" id="IPR000276">
    <property type="entry name" value="GPCR_Rhodpsn"/>
</dbReference>
<dbReference type="InterPro" id="IPR017452">
    <property type="entry name" value="GPCR_Rhodpsn_7TM"/>
</dbReference>
<dbReference type="PANTHER" id="PTHR24248:SF191">
    <property type="entry name" value="5-HYDROXYTRYPTAMINE RECEPTOR 1A"/>
    <property type="match status" value="1"/>
</dbReference>
<dbReference type="PANTHER" id="PTHR24248">
    <property type="entry name" value="ADRENERGIC RECEPTOR-RELATED G-PROTEIN COUPLED RECEPTOR"/>
    <property type="match status" value="1"/>
</dbReference>
<dbReference type="Pfam" id="PF00001">
    <property type="entry name" value="7tm_1"/>
    <property type="match status" value="1"/>
</dbReference>
<dbReference type="PRINTS" id="PR00512">
    <property type="entry name" value="5HT1ARECEPTR"/>
</dbReference>
<dbReference type="PRINTS" id="PR01101">
    <property type="entry name" value="5HTRECEPTOR"/>
</dbReference>
<dbReference type="PRINTS" id="PR00237">
    <property type="entry name" value="GPCRRHODOPSN"/>
</dbReference>
<dbReference type="SMART" id="SM01381">
    <property type="entry name" value="7TM_GPCR_Srsx"/>
    <property type="match status" value="1"/>
</dbReference>
<dbReference type="SUPFAM" id="SSF81321">
    <property type="entry name" value="Family A G protein-coupled receptor-like"/>
    <property type="match status" value="1"/>
</dbReference>
<dbReference type="PROSITE" id="PS00237">
    <property type="entry name" value="G_PROTEIN_RECEP_F1_1"/>
    <property type="match status" value="1"/>
</dbReference>
<dbReference type="PROSITE" id="PS50262">
    <property type="entry name" value="G_PROTEIN_RECEP_F1_2"/>
    <property type="match status" value="1"/>
</dbReference>
<keyword id="KW-0085">Behavior</keyword>
<keyword id="KW-1003">Cell membrane</keyword>
<keyword id="KW-1015">Disulfide bond</keyword>
<keyword id="KW-0297">G-protein coupled receptor</keyword>
<keyword id="KW-0325">Glycoprotein</keyword>
<keyword id="KW-0472">Membrane</keyword>
<keyword id="KW-0675">Receptor</keyword>
<keyword id="KW-1185">Reference proteome</keyword>
<keyword id="KW-0807">Transducer</keyword>
<keyword id="KW-0812">Transmembrane</keyword>
<keyword id="KW-1133">Transmembrane helix</keyword>
<name>5H1AA_TAKRU</name>
<sequence length="423" mass="47001">MDLRATSSNDSNATSGYSDTAAVDWDEGENATGSGSLPDPELSYQIITSLFLGALILCSIFGNSCVVAAIALERSLQNVANYLIGSLAVTDLMVSVLVLPMAALYQVLNKWTLGQDICDLFIALDVLCCTSSILHLCAIALDRYWAITDPIDYVNKRTPRRAAVLISVTWLIGFSISIPPMLGWRSAEDRANPDACIISQDPGYTIYSTFGAFYIPLILMLVLYGRIFKAARFRIRKTVKKTEKAKASDMCLTLSPAVFHKRANGDAVSAEWKRGYKFKPSSPCANGAVRHGEEMESLEIIEVNSNSKTHLPLPNTPQSSSHENINEKTTGTRRKIALARERKTVKTLGIIMGTFIFCWLPFFIVALVLPFCAENCYMPEWLGAVINWLGYSNSLLNPIIYAYFNKDFQSAFKKILRCKFHRH</sequence>
<gene>
    <name type="primary">htr1aa</name>
</gene>